<protein>
    <recommendedName>
        <fullName>Phospholipid-transporting ATPase DRS2</fullName>
        <ecNumber evidence="19 25 38 39 41 42 44">7.6.2.1</ecNumber>
    </recommendedName>
</protein>
<gene>
    <name evidence="36" type="primary">DRS2</name>
    <name evidence="35" type="synonym">SWA3</name>
    <name type="ordered locus">YAL026C</name>
    <name type="ORF">FUN38</name>
</gene>
<dbReference type="EC" id="7.6.2.1" evidence="19 25 38 39 41 42 44"/>
<dbReference type="EMBL" id="L01795">
    <property type="protein sequence ID" value="AAA16891.1"/>
    <property type="molecule type" value="Unassigned_RNA"/>
</dbReference>
<dbReference type="EMBL" id="U12980">
    <property type="protein sequence ID" value="AAC05006.1"/>
    <property type="molecule type" value="Genomic_DNA"/>
</dbReference>
<dbReference type="EMBL" id="BK006935">
    <property type="protein sequence ID" value="DAA06962.2"/>
    <property type="molecule type" value="Genomic_DNA"/>
</dbReference>
<dbReference type="PIR" id="S51995">
    <property type="entry name" value="S51995"/>
</dbReference>
<dbReference type="RefSeq" id="NP_009376.2">
    <property type="nucleotide sequence ID" value="NM_001178171.2"/>
</dbReference>
<dbReference type="PDB" id="6PSX">
    <property type="method" value="EM"/>
    <property type="resolution" value="3.30 A"/>
    <property type="chains" value="A=1-1355"/>
</dbReference>
<dbReference type="PDB" id="6PSY">
    <property type="method" value="EM"/>
    <property type="resolution" value="2.80 A"/>
    <property type="chains" value="A=1-1355"/>
</dbReference>
<dbReference type="PDB" id="6ROH">
    <property type="method" value="EM"/>
    <property type="resolution" value="2.80 A"/>
    <property type="chains" value="A=1-1355"/>
</dbReference>
<dbReference type="PDB" id="6ROI">
    <property type="method" value="EM"/>
    <property type="resolution" value="3.70 A"/>
    <property type="chains" value="A=1-1355"/>
</dbReference>
<dbReference type="PDB" id="6ROJ">
    <property type="method" value="EM"/>
    <property type="resolution" value="2.90 A"/>
    <property type="chains" value="A=1-1355"/>
</dbReference>
<dbReference type="PDB" id="7OH4">
    <property type="method" value="EM"/>
    <property type="resolution" value="3.00 A"/>
    <property type="chains" value="A=1-1355"/>
</dbReference>
<dbReference type="PDB" id="7OH5">
    <property type="method" value="EM"/>
    <property type="resolution" value="2.90 A"/>
    <property type="chains" value="A=1-1355"/>
</dbReference>
<dbReference type="PDB" id="7OH6">
    <property type="method" value="EM"/>
    <property type="resolution" value="3.00 A"/>
    <property type="chains" value="A=1-1355"/>
</dbReference>
<dbReference type="PDB" id="7OH7">
    <property type="method" value="EM"/>
    <property type="resolution" value="3.80 A"/>
    <property type="chains" value="A=1-1355"/>
</dbReference>
<dbReference type="PDB" id="7PEM">
    <property type="method" value="EM"/>
    <property type="resolution" value="3.10 A"/>
    <property type="chains" value="A=1-1355"/>
</dbReference>
<dbReference type="PDBsum" id="6PSX"/>
<dbReference type="PDBsum" id="6PSY"/>
<dbReference type="PDBsum" id="6ROH"/>
<dbReference type="PDBsum" id="6ROI"/>
<dbReference type="PDBsum" id="6ROJ"/>
<dbReference type="PDBsum" id="7OH4"/>
<dbReference type="PDBsum" id="7OH5"/>
<dbReference type="PDBsum" id="7OH6"/>
<dbReference type="PDBsum" id="7OH7"/>
<dbReference type="PDBsum" id="7PEM"/>
<dbReference type="EMDB" id="EMD-12893"/>
<dbReference type="EMDB" id="EMD-12894"/>
<dbReference type="EMDB" id="EMD-12895"/>
<dbReference type="EMDB" id="EMD-12896"/>
<dbReference type="EMDB" id="EMD-13353"/>
<dbReference type="EMDB" id="EMD-20467"/>
<dbReference type="EMDB" id="EMD-20468"/>
<dbReference type="EMDB" id="EMD-4972"/>
<dbReference type="EMDB" id="EMD-4973"/>
<dbReference type="SMR" id="P39524"/>
<dbReference type="BioGRID" id="31740">
    <property type="interactions" value="628"/>
</dbReference>
<dbReference type="ComplexPortal" id="CPX-1018">
    <property type="entry name" value="DRS2-CDC50 P4-ATPase complex"/>
</dbReference>
<dbReference type="DIP" id="DIP-2216N"/>
<dbReference type="FunCoup" id="P39524">
    <property type="interactions" value="402"/>
</dbReference>
<dbReference type="IntAct" id="P39524">
    <property type="interactions" value="38"/>
</dbReference>
<dbReference type="MINT" id="P39524"/>
<dbReference type="STRING" id="4932.YAL026C"/>
<dbReference type="TCDB" id="3.A.3.8.2">
    <property type="family name" value="the p-type atpase (p-atpase) superfamily"/>
</dbReference>
<dbReference type="iPTMnet" id="P39524"/>
<dbReference type="PaxDb" id="4932-YAL026C"/>
<dbReference type="PeptideAtlas" id="P39524"/>
<dbReference type="EnsemblFungi" id="YAL026C_mRNA">
    <property type="protein sequence ID" value="YAL026C"/>
    <property type="gene ID" value="YAL026C"/>
</dbReference>
<dbReference type="GeneID" id="851207"/>
<dbReference type="KEGG" id="sce:YAL026C"/>
<dbReference type="AGR" id="SGD:S000000024"/>
<dbReference type="SGD" id="S000000024">
    <property type="gene designation" value="DRS2"/>
</dbReference>
<dbReference type="VEuPathDB" id="FungiDB:YAL026C"/>
<dbReference type="eggNOG" id="KOG0206">
    <property type="taxonomic scope" value="Eukaryota"/>
</dbReference>
<dbReference type="GeneTree" id="ENSGT00940000168736"/>
<dbReference type="HOGENOM" id="CLU_000846_3_0_1"/>
<dbReference type="InParanoid" id="P39524"/>
<dbReference type="OMA" id="MHSFWSW"/>
<dbReference type="OrthoDB" id="377733at2759"/>
<dbReference type="BioCyc" id="YEAST:G3O-28837-MONOMER"/>
<dbReference type="BRENDA" id="7.6.2.1">
    <property type="organism ID" value="984"/>
</dbReference>
<dbReference type="Reactome" id="R-SCE-6798695">
    <property type="pathway name" value="Neutrophil degranulation"/>
</dbReference>
<dbReference type="Reactome" id="R-SCE-936837">
    <property type="pathway name" value="Ion transport by P-type ATPases"/>
</dbReference>
<dbReference type="BioGRID-ORCS" id="851207">
    <property type="hits" value="4 hits in 10 CRISPR screens"/>
</dbReference>
<dbReference type="PRO" id="PR:P39524"/>
<dbReference type="Proteomes" id="UP000002311">
    <property type="component" value="Chromosome I"/>
</dbReference>
<dbReference type="RNAct" id="P39524">
    <property type="molecule type" value="protein"/>
</dbReference>
<dbReference type="GO" id="GO:1990530">
    <property type="term" value="C:Cdc50p-Drs2p complex"/>
    <property type="evidence" value="ECO:0000353"/>
    <property type="project" value="SGD"/>
</dbReference>
<dbReference type="GO" id="GO:0005783">
    <property type="term" value="C:endoplasmic reticulum"/>
    <property type="evidence" value="ECO:0007005"/>
    <property type="project" value="SGD"/>
</dbReference>
<dbReference type="GO" id="GO:0010008">
    <property type="term" value="C:endosome membrane"/>
    <property type="evidence" value="ECO:0007669"/>
    <property type="project" value="UniProtKB-SubCell"/>
</dbReference>
<dbReference type="GO" id="GO:1990531">
    <property type="term" value="C:phospholipid-translocating ATPase complex"/>
    <property type="evidence" value="ECO:0000303"/>
    <property type="project" value="ComplexPortal"/>
</dbReference>
<dbReference type="GO" id="GO:0005886">
    <property type="term" value="C:plasma membrane"/>
    <property type="evidence" value="ECO:0000318"/>
    <property type="project" value="GO_Central"/>
</dbReference>
<dbReference type="GO" id="GO:0005802">
    <property type="term" value="C:trans-Golgi network"/>
    <property type="evidence" value="ECO:0000314"/>
    <property type="project" value="SGD"/>
</dbReference>
<dbReference type="GO" id="GO:0005524">
    <property type="term" value="F:ATP binding"/>
    <property type="evidence" value="ECO:0007669"/>
    <property type="project" value="UniProtKB-KW"/>
</dbReference>
<dbReference type="GO" id="GO:0016887">
    <property type="term" value="F:ATP hydrolysis activity"/>
    <property type="evidence" value="ECO:0007669"/>
    <property type="project" value="InterPro"/>
</dbReference>
<dbReference type="GO" id="GO:0140326">
    <property type="term" value="F:ATPase-coupled intramembrane lipid transporter activity"/>
    <property type="evidence" value="ECO:0000318"/>
    <property type="project" value="GO_Central"/>
</dbReference>
<dbReference type="GO" id="GO:0000287">
    <property type="term" value="F:magnesium ion binding"/>
    <property type="evidence" value="ECO:0007669"/>
    <property type="project" value="InterPro"/>
</dbReference>
<dbReference type="GO" id="GO:0140345">
    <property type="term" value="F:phosphatidylcholine flippase activity"/>
    <property type="evidence" value="ECO:0000316"/>
    <property type="project" value="SGD"/>
</dbReference>
<dbReference type="GO" id="GO:0090555">
    <property type="term" value="F:phosphatidylethanolamine flippase activity"/>
    <property type="evidence" value="ECO:0000315"/>
    <property type="project" value="SGD"/>
</dbReference>
<dbReference type="GO" id="GO:0070273">
    <property type="term" value="F:phosphatidylinositol-4-phosphate binding"/>
    <property type="evidence" value="ECO:0000314"/>
    <property type="project" value="UniProtKB"/>
</dbReference>
<dbReference type="GO" id="GO:0140346">
    <property type="term" value="F:phosphatidylserine flippase activity"/>
    <property type="evidence" value="ECO:0000314"/>
    <property type="project" value="UniProtKB"/>
</dbReference>
<dbReference type="GO" id="GO:0090556">
    <property type="term" value="F:phosphatidylserine floppase activity"/>
    <property type="evidence" value="ECO:0007669"/>
    <property type="project" value="RHEA"/>
</dbReference>
<dbReference type="GO" id="GO:0032456">
    <property type="term" value="P:endocytic recycling"/>
    <property type="evidence" value="ECO:0000315"/>
    <property type="project" value="SGD"/>
</dbReference>
<dbReference type="GO" id="GO:0006897">
    <property type="term" value="P:endocytosis"/>
    <property type="evidence" value="ECO:0000316"/>
    <property type="project" value="SGD"/>
</dbReference>
<dbReference type="GO" id="GO:0045332">
    <property type="term" value="P:phospholipid translocation"/>
    <property type="evidence" value="ECO:0000314"/>
    <property type="project" value="UniProtKB"/>
</dbReference>
<dbReference type="GO" id="GO:0006892">
    <property type="term" value="P:post-Golgi vesicle-mediated transport"/>
    <property type="evidence" value="ECO:0000315"/>
    <property type="project" value="SGD"/>
</dbReference>
<dbReference type="CDD" id="cd02073">
    <property type="entry name" value="P-type_ATPase_APLT_Dnf-like"/>
    <property type="match status" value="1"/>
</dbReference>
<dbReference type="FunFam" id="2.70.150.10:FF:000026">
    <property type="entry name" value="Phospholipid-transporting ATPase"/>
    <property type="match status" value="1"/>
</dbReference>
<dbReference type="FunFam" id="3.40.1110.10:FF:000047">
    <property type="entry name" value="Phospholipid-transporting ATPase"/>
    <property type="match status" value="1"/>
</dbReference>
<dbReference type="FunFam" id="3.40.50.1000:FF:000010">
    <property type="entry name" value="Phospholipid-transporting ATPase"/>
    <property type="match status" value="1"/>
</dbReference>
<dbReference type="Gene3D" id="3.40.1110.10">
    <property type="entry name" value="Calcium-transporting ATPase, cytoplasmic domain N"/>
    <property type="match status" value="1"/>
</dbReference>
<dbReference type="Gene3D" id="2.70.150.10">
    <property type="entry name" value="Calcium-transporting ATPase, cytoplasmic transduction domain A"/>
    <property type="match status" value="1"/>
</dbReference>
<dbReference type="Gene3D" id="3.40.50.1000">
    <property type="entry name" value="HAD superfamily/HAD-like"/>
    <property type="match status" value="1"/>
</dbReference>
<dbReference type="InterPro" id="IPR023299">
    <property type="entry name" value="ATPase_P-typ_cyto_dom_N"/>
</dbReference>
<dbReference type="InterPro" id="IPR018303">
    <property type="entry name" value="ATPase_P-typ_P_site"/>
</dbReference>
<dbReference type="InterPro" id="IPR023298">
    <property type="entry name" value="ATPase_P-typ_TM_dom_sf"/>
</dbReference>
<dbReference type="InterPro" id="IPR008250">
    <property type="entry name" value="ATPase_P-typ_transduc_dom_A_sf"/>
</dbReference>
<dbReference type="InterPro" id="IPR036412">
    <property type="entry name" value="HAD-like_sf"/>
</dbReference>
<dbReference type="InterPro" id="IPR023214">
    <property type="entry name" value="HAD_sf"/>
</dbReference>
<dbReference type="InterPro" id="IPR006539">
    <property type="entry name" value="P-type_ATPase_IV"/>
</dbReference>
<dbReference type="InterPro" id="IPR032631">
    <property type="entry name" value="P-type_ATPase_N"/>
</dbReference>
<dbReference type="InterPro" id="IPR001757">
    <property type="entry name" value="P_typ_ATPase"/>
</dbReference>
<dbReference type="InterPro" id="IPR032630">
    <property type="entry name" value="P_typ_ATPase_c"/>
</dbReference>
<dbReference type="InterPro" id="IPR044492">
    <property type="entry name" value="P_typ_ATPase_HD_dom"/>
</dbReference>
<dbReference type="NCBIfam" id="TIGR01652">
    <property type="entry name" value="ATPase-Plipid"/>
    <property type="match status" value="1"/>
</dbReference>
<dbReference type="NCBIfam" id="TIGR01494">
    <property type="entry name" value="ATPase_P-type"/>
    <property type="match status" value="1"/>
</dbReference>
<dbReference type="PANTHER" id="PTHR24092:SF150">
    <property type="entry name" value="PHOSPHOLIPID-TRANSPORTING ATPASE"/>
    <property type="match status" value="1"/>
</dbReference>
<dbReference type="PANTHER" id="PTHR24092">
    <property type="entry name" value="PROBABLE PHOSPHOLIPID-TRANSPORTING ATPASE"/>
    <property type="match status" value="1"/>
</dbReference>
<dbReference type="Pfam" id="PF13246">
    <property type="entry name" value="Cation_ATPase"/>
    <property type="match status" value="1"/>
</dbReference>
<dbReference type="Pfam" id="PF16212">
    <property type="entry name" value="PhoLip_ATPase_C"/>
    <property type="match status" value="1"/>
</dbReference>
<dbReference type="Pfam" id="PF16209">
    <property type="entry name" value="PhoLip_ATPase_N"/>
    <property type="match status" value="1"/>
</dbReference>
<dbReference type="PRINTS" id="PR00119">
    <property type="entry name" value="CATATPASE"/>
</dbReference>
<dbReference type="SFLD" id="SFLDS00003">
    <property type="entry name" value="Haloacid_Dehalogenase"/>
    <property type="match status" value="1"/>
</dbReference>
<dbReference type="SFLD" id="SFLDF00027">
    <property type="entry name" value="p-type_atpase"/>
    <property type="match status" value="1"/>
</dbReference>
<dbReference type="SUPFAM" id="SSF81653">
    <property type="entry name" value="Calcium ATPase, transduction domain A"/>
    <property type="match status" value="1"/>
</dbReference>
<dbReference type="SUPFAM" id="SSF81665">
    <property type="entry name" value="Calcium ATPase, transmembrane domain M"/>
    <property type="match status" value="1"/>
</dbReference>
<dbReference type="SUPFAM" id="SSF56784">
    <property type="entry name" value="HAD-like"/>
    <property type="match status" value="1"/>
</dbReference>
<dbReference type="SUPFAM" id="SSF81660">
    <property type="entry name" value="Metal cation-transporting ATPase, ATP-binding domain N"/>
    <property type="match status" value="1"/>
</dbReference>
<dbReference type="PROSITE" id="PS00154">
    <property type="entry name" value="ATPASE_E1_E2"/>
    <property type="match status" value="1"/>
</dbReference>
<accession>P39524</accession>
<accession>D6VPJ2</accession>
<keyword id="KW-0002">3D-structure</keyword>
<keyword id="KW-0067">ATP-binding</keyword>
<keyword id="KW-0967">Endosome</keyword>
<keyword id="KW-0333">Golgi apparatus</keyword>
<keyword id="KW-0446">Lipid-binding</keyword>
<keyword id="KW-0460">Magnesium</keyword>
<keyword id="KW-0472">Membrane</keyword>
<keyword id="KW-0479">Metal-binding</keyword>
<keyword id="KW-0547">Nucleotide-binding</keyword>
<keyword id="KW-0597">Phosphoprotein</keyword>
<keyword id="KW-1185">Reference proteome</keyword>
<keyword id="KW-1278">Translocase</keyword>
<keyword id="KW-0812">Transmembrane</keyword>
<keyword id="KW-1133">Transmembrane helix</keyword>
<proteinExistence type="evidence at protein level"/>
<comment type="function">
    <text evidence="8 9 15 16 17 18 19 20 21 22 25 26 28 29 30 31 32 33">Catalytic component of a P4-ATPase flippase complex which catalyzes the hydrolysis of ATP coupled to the transport of phosphatidylserine and small amounts of ethanolamine from the lumen to the cytosolic leaflet of the trans-Golgi network and ensures the maintenance of asymmetric distribution of phospholipids (PubMed:15249668, PubMed:16452632, PubMed:16956384, PubMed:19411703, PubMed:19805341, PubMed:19898464, PubMed:22308393, PubMed:24045945, PubMed:25393116, PubMed:28302728, PubMed:30824614, PubMed:31243363, PubMed:31515475, PubMed:34023399). Contributes to clathrin-coated vesicle formation, endocytosis, and protein trafficking between the Golgi and endosomal system (PubMed:10601336, PubMed:12372257, PubMed:15249668, PubMed:16452632, PubMed:16956384, PubMed:21212072, PubMed:8247005). Does not appear to transport phosphatidylcholine or sphingomyelin (PubMed:15249668, PubMed:19805341, PubMed:24045945).</text>
</comment>
<comment type="catalytic activity">
    <reaction evidence="19 25 38 39 41 42 44 45 46 47">
        <text>ATP + H2O + phospholipidSide 1 = ADP + phosphate + phospholipidSide 2.</text>
        <dbReference type="EC" id="7.6.2.1"/>
    </reaction>
</comment>
<comment type="catalytic activity">
    <reaction evidence="19 25 38 39 41 42 44">
        <text>a 1,2-diacyl-sn-glycero-3-phospho-L-serine(out) + ATP + H2O = a 1,2-diacyl-sn-glycero-3-phospho-L-serine(in) + ADP + phosphate + H(+)</text>
        <dbReference type="Rhea" id="RHEA:38567"/>
        <dbReference type="ChEBI" id="CHEBI:15377"/>
        <dbReference type="ChEBI" id="CHEBI:15378"/>
        <dbReference type="ChEBI" id="CHEBI:30616"/>
        <dbReference type="ChEBI" id="CHEBI:43474"/>
        <dbReference type="ChEBI" id="CHEBI:57262"/>
        <dbReference type="ChEBI" id="CHEBI:456216"/>
    </reaction>
    <physiologicalReaction direction="left-to-right" evidence="19 25 38 39 41 42 44">
        <dbReference type="Rhea" id="RHEA:38568"/>
    </physiologicalReaction>
</comment>
<comment type="catalytic activity">
    <reaction evidence="39">
        <text>a 1,2-diacyl-sn-glycero-3-phosphoethanolamine(out) + ATP + H2O = a 1,2-diacyl-sn-glycero-3-phosphoethanolamine(in) + ADP + phosphate + H(+)</text>
        <dbReference type="Rhea" id="RHEA:66132"/>
        <dbReference type="ChEBI" id="CHEBI:15377"/>
        <dbReference type="ChEBI" id="CHEBI:15378"/>
        <dbReference type="ChEBI" id="CHEBI:30616"/>
        <dbReference type="ChEBI" id="CHEBI:43474"/>
        <dbReference type="ChEBI" id="CHEBI:64612"/>
        <dbReference type="ChEBI" id="CHEBI:456216"/>
    </reaction>
    <physiologicalReaction direction="left-to-right" evidence="39">
        <dbReference type="Rhea" id="RHEA:66133"/>
    </physiologicalReaction>
</comment>
<comment type="cofactor">
    <cofactor evidence="19 32 38 43">
        <name>Mg(2+)</name>
        <dbReference type="ChEBI" id="CHEBI:18420"/>
    </cofactor>
</comment>
<comment type="activity regulation">
    <text evidence="18 19 20 25 26 28 30 31 32">Allosterically activated by binding 1,2-diacyl-sn-glycero-3-phospho-(1D-myo-inositol 4-phosphate) (phosphatidylinositol 4-phosphate) (PubMed:24045945, PubMed:25393116, PubMed:28302728, PubMed:31243363, PubMed:31515475, PubMed:34023399). Inhibited by orthovanadate, N-ethylmaleimide, trifluoroberyllate and tetrafluoroaluminate; orthovanadate and N-ethylmaleimide inhibit phosphorylation of the active site aspartic acid (PubMed:19411703, PubMed:19805341, PubMed:24045945, PubMed:25393116). The ATPase activity is not potently stimulated by phosphatidylinositol 3-phosphate and phosphatidylinositol 5-phosphate, phosphatidylinositol 4,5-bisphosphate or phosphatidylcholine (PubMed:19805341, PubMed:19898464, PubMed:24045945). Not inhibited by azide (PubMed:19805341).</text>
</comment>
<comment type="subunit">
    <text evidence="13 14 17 18 21 23 26 28 30 31 34">Component of a flippase complex consisting of DRS2 and CDC50 (PubMed:19411703, PubMed:22791719, PubMed:25393116, PubMed:28302728, PubMed:31243363, PubMed:31515475, Ref.33). Interacts with CDC50; the interaction is direct, is required for their mutual export from the endoplasmic reticulum, and preferentially occurs when DRS2 is in the E2P state (PubMed:15090616, PubMed:16956384, PubMed:19411703, PubMed:21212072, PubMed:22791719, PubMed:25393116, PubMed:28302728, PubMed:31243363, PubMed:31515475, Ref.33). Interacts (via C-terminus) with GEA2 (via SEC7 domain); the interaction is direct (PubMed:14734650). Interacts with GEA1 (PubMed:14734650).</text>
</comment>
<comment type="interaction">
    <interactant intactId="EBI-3106">
        <id>P39524</id>
    </interactant>
    <interactant intactId="EBI-22014">
        <id>P25656</id>
        <label>CDC50</label>
    </interactant>
    <organismsDiffer>false</organismsDiffer>
    <experiments>11</experiments>
</comment>
<comment type="subcellular location">
    <subcellularLocation>
        <location evidence="8 9 10 11 15 17 18 20">Golgi apparatus</location>
        <location evidence="8 9 10 11 15 17 18 20">trans-Golgi network membrane</location>
        <topology evidence="9 11">Multi-pass membrane protein</topology>
    </subcellularLocation>
    <subcellularLocation>
        <location evidence="16">Endosome membrane</location>
        <topology evidence="6">Multi-pass membrane protein</topology>
    </subcellularLocation>
</comment>
<comment type="domain">
    <text evidence="25 28 31">The C-terminal part (1231-1309) serves an autoinhibitory function and is dislodged upon substrate binding.</text>
</comment>
<comment type="mass spectrometry" mass="153900.0" method="MALDI" evidence="28"/>
<comment type="disruption phenotype">
    <text evidence="8 10 13 16 17 18 19 20 22 24 26 27 29">Decreases phosphatidylserine and phosphatidylethanolamine flippase activity in secretory vesicles; simultaneous knockout of DNF3 exacerbates the effect (PubMed:16452632). Abnormal vesicle-mediated transport to vacuole (PubMed:10601336). Abnormal proteolytic processing of proteins in the trans-Golgi network (PubMed:10601336). Contains abnormal clathrin-coated vesicles and leads to an accumulation of aberrant membranous material probably derived from the Golgi (PubMed:10601336, PubMed:14734650). Increases phosphatidylserine and phosphatidylethanolamine levels in the outer leaflet of the cell membrane (PubMed:12631737, PubMed:16956384). Abnormal endocytosis (PubMed:12631737). Sensitive to cold, duramycin and cinnamycin (phosphatidylethanolamine-binding cytotoxins), papuamide A and B (phosphatidylserine-binding cytotoxins), cobalt, nickel, zinc, calcium, and magnesium ions (PubMed:10601336, PubMed:16956384, PubMed:19411703, PubMed:19805341, PubMed:19898464, PubMed:22308393, PubMed:23302692, PubMed:25393116, PubMed:27235400, PubMed:30824614). Simultaneous knockout of ARF1 results in inviability, and simultaneous knockout of GEA2 exacerbates cold sensitivity (PubMed:10601336, PubMed:14734650).</text>
</comment>
<comment type="miscellaneous">
    <text evidence="12">Present with 606 molecules/cell in log phase SD medium.</text>
</comment>
<comment type="similarity">
    <text evidence="37">Belongs to the cation transport ATPase (P-type) (TC 3.A.3) family. Type IV subfamily.</text>
</comment>
<sequence length="1355" mass="153765">MNDDRETPPKRKPGEDDTLFDIDFLDDTTSHSGSRSKVTNSHANANYIPPSHVLPEETIDLDADDDNIENDVHENLFMSNNHDDQTSWNANRFDSDAYQPQSLRAVKPPGLFARFGNGLKNAFTFKRKKGPESFEMNHYNAVTNNELDDNYLDSRNKFNIKILFNRYILRKNVGDAEGNGEPRVIHINDSLANSSFGYSDNHISTTKYNFATFLPKFLFQEFSKYANLFFLCTSAIQQVPHVSPTNRYTTIGTLLVVLIVSAMKECIEDIKRANSDKELNNSTAEIFSEAHDDFVEKRWIDIRVGDIIRVKSEEPIPADTIILSSSEPEGLCYIETANLDGETNLKIKQSRVETAKFIDVKTLKNMNGKVVSEQPNSSLYTYEGTMTLNDRQIPLSPDQMILRGATLRNTAWIFGLVIFTGHETKLLRNATATPIKRTAVEKIINRQIIALFTVLIVLILISSIGNVIMSTADAKHLSYLYLEGTNKAGLFFKDFLTFWILFSNLVPISLFVTVELIKYYQAFMIGSDLDLYYEKTDTPTVVRTSSLVEELGQIEYIFSDKTGTLTRNIMEFKSCSIAGHCYIDKIPEDKTATVEDGIEVGYRKFDDLKKKLNDPSDEDSPIINDFLTLLATCHTVIPEFQSDGSIKYQAASPDEGALVQGGADLGYKFIIRKPNSVTVLLEETGEEKEYQLLNICEFNSTRKRMSAIFRFPDGSIKLFCKGADTVILERLDDEANQYVEATMRHLEDYASEGLRTLCLAMRDISEGEYEEWNSIYNEAATTLDNRAEKLDEAANLIEKNLILIGATAIEDKLQDGVPETIHTLQEAGIKIWVLTGDRQETAINIGMSCRLLSEDMNLLIINEETRDDTERNLLEKINALNEHQLSTHDMNTLALVIDGKSLGFALEPELEDYLLTVAKLCKAVICCRVSPLQKALVVKMVKRKSSSLLLAIGDGANDVSMIQAAHVGVGISGMEGMQAARSADIAVGQFKFLKKLLLVHGSWSYQRISVAILYSFYKNTALYMTQFWYVFANAFSGQSIMESWTMSFYNLFFTVWPPFVIGVFDQFVSSRLLERYPQLYKLGQKGQFFSVYIFWGWIINGFFHSAIVFIGTILIYRYGFALNMHGELADHWSWGVTVYTTSVIIVLGKAALVTNQWTKFTLIAIPGSLLFWLIFFPIYASIFPHANISREYYGVVKHTYGSGVFWLTLIVLPIFALVRDFLWKYYKRMYEPETYHVIQEMQKYNISDSRPHVQQFQNAIRKVRQVQRMKKQRGFAFSQAEEGGQEKIVRMYDTTQKRGKYGELQDASANPFNDNNGLGSNDFESAEPFIENPFADGNQNSNRFSSSRDDISFDI</sequence>
<organism>
    <name type="scientific">Saccharomyces cerevisiae (strain ATCC 204508 / S288c)</name>
    <name type="common">Baker's yeast</name>
    <dbReference type="NCBI Taxonomy" id="559292"/>
    <lineage>
        <taxon>Eukaryota</taxon>
        <taxon>Fungi</taxon>
        <taxon>Dikarya</taxon>
        <taxon>Ascomycota</taxon>
        <taxon>Saccharomycotina</taxon>
        <taxon>Saccharomycetes</taxon>
        <taxon>Saccharomycetales</taxon>
        <taxon>Saccharomycetaceae</taxon>
        <taxon>Saccharomyces</taxon>
    </lineage>
</organism>
<name>ATC3_YEAST</name>
<evidence type="ECO:0000250" key="1">
    <source>
        <dbReference type="UniProtKB" id="C7EXK4"/>
    </source>
</evidence>
<evidence type="ECO:0000250" key="2">
    <source>
        <dbReference type="UniProtKB" id="P04191"/>
    </source>
</evidence>
<evidence type="ECO:0000250" key="3">
    <source>
        <dbReference type="UniProtKB" id="P32660"/>
    </source>
</evidence>
<evidence type="ECO:0000250" key="4">
    <source>
        <dbReference type="UniProtKB" id="Q8NB49"/>
    </source>
</evidence>
<evidence type="ECO:0000250" key="5">
    <source>
        <dbReference type="UniProtKB" id="Q9Y2Q0"/>
    </source>
</evidence>
<evidence type="ECO:0000255" key="6"/>
<evidence type="ECO:0000256" key="7">
    <source>
        <dbReference type="SAM" id="MobiDB-lite"/>
    </source>
</evidence>
<evidence type="ECO:0000269" key="8">
    <source>
    </source>
</evidence>
<evidence type="ECO:0000269" key="9">
    <source>
    </source>
</evidence>
<evidence type="ECO:0000269" key="10">
    <source>
    </source>
</evidence>
<evidence type="ECO:0000269" key="11">
    <source>
    </source>
</evidence>
<evidence type="ECO:0000269" key="12">
    <source>
    </source>
</evidence>
<evidence type="ECO:0000269" key="13">
    <source>
    </source>
</evidence>
<evidence type="ECO:0000269" key="14">
    <source>
    </source>
</evidence>
<evidence type="ECO:0000269" key="15">
    <source>
    </source>
</evidence>
<evidence type="ECO:0000269" key="16">
    <source>
    </source>
</evidence>
<evidence type="ECO:0000269" key="17">
    <source>
    </source>
</evidence>
<evidence type="ECO:0000269" key="18">
    <source>
    </source>
</evidence>
<evidence type="ECO:0000269" key="19">
    <source>
    </source>
</evidence>
<evidence type="ECO:0000269" key="20">
    <source>
    </source>
</evidence>
<evidence type="ECO:0000269" key="21">
    <source>
    </source>
</evidence>
<evidence type="ECO:0000269" key="22">
    <source>
    </source>
</evidence>
<evidence type="ECO:0000269" key="23">
    <source>
    </source>
</evidence>
<evidence type="ECO:0000269" key="24">
    <source>
    </source>
</evidence>
<evidence type="ECO:0000269" key="25">
    <source>
    </source>
</evidence>
<evidence type="ECO:0000269" key="26">
    <source>
    </source>
</evidence>
<evidence type="ECO:0000269" key="27">
    <source>
    </source>
</evidence>
<evidence type="ECO:0000269" key="28">
    <source>
    </source>
</evidence>
<evidence type="ECO:0000269" key="29">
    <source>
    </source>
</evidence>
<evidence type="ECO:0000269" key="30">
    <source>
    </source>
</evidence>
<evidence type="ECO:0000269" key="31">
    <source>
    </source>
</evidence>
<evidence type="ECO:0000269" key="32">
    <source>
    </source>
</evidence>
<evidence type="ECO:0000269" key="33">
    <source>
    </source>
</evidence>
<evidence type="ECO:0000269" key="34">
    <source ref="33"/>
</evidence>
<evidence type="ECO:0000303" key="35">
    <source>
    </source>
</evidence>
<evidence type="ECO:0000303" key="36">
    <source>
    </source>
</evidence>
<evidence type="ECO:0000305" key="37"/>
<evidence type="ECO:0000305" key="38">
    <source>
    </source>
</evidence>
<evidence type="ECO:0000305" key="39">
    <source>
    </source>
</evidence>
<evidence type="ECO:0000305" key="40">
    <source>
    </source>
</evidence>
<evidence type="ECO:0000305" key="41">
    <source>
    </source>
</evidence>
<evidence type="ECO:0000305" key="42">
    <source>
    </source>
</evidence>
<evidence type="ECO:0000305" key="43">
    <source>
    </source>
</evidence>
<evidence type="ECO:0000305" key="44">
    <source>
    </source>
</evidence>
<evidence type="ECO:0000305" key="45">
    <source>
    </source>
</evidence>
<evidence type="ECO:0000305" key="46">
    <source>
    </source>
</evidence>
<evidence type="ECO:0000305" key="47">
    <source>
    </source>
</evidence>
<evidence type="ECO:0007744" key="48">
    <source>
        <dbReference type="PDB" id="6PSX"/>
    </source>
</evidence>
<evidence type="ECO:0007744" key="49">
    <source>
        <dbReference type="PDB" id="6PSY"/>
    </source>
</evidence>
<evidence type="ECO:0007744" key="50">
    <source>
        <dbReference type="PDB" id="6ROH"/>
    </source>
</evidence>
<evidence type="ECO:0007744" key="51">
    <source>
        <dbReference type="PDB" id="6ROI"/>
    </source>
</evidence>
<evidence type="ECO:0007744" key="52">
    <source>
        <dbReference type="PDB" id="6ROJ"/>
    </source>
</evidence>
<evidence type="ECO:0007744" key="53">
    <source>
        <dbReference type="PDB" id="7OH4"/>
    </source>
</evidence>
<evidence type="ECO:0007744" key="54">
    <source>
        <dbReference type="PDB" id="7OH5"/>
    </source>
</evidence>
<evidence type="ECO:0007744" key="55">
    <source>
        <dbReference type="PDB" id="7OH6"/>
    </source>
</evidence>
<evidence type="ECO:0007744" key="56">
    <source>
        <dbReference type="PDB" id="7OH7"/>
    </source>
</evidence>
<evidence type="ECO:0007744" key="57">
    <source>
        <dbReference type="PDB" id="7PEM"/>
    </source>
</evidence>
<evidence type="ECO:0007744" key="58">
    <source>
    </source>
</evidence>
<evidence type="ECO:0007744" key="59">
    <source>
    </source>
</evidence>
<evidence type="ECO:0007829" key="60">
    <source>
        <dbReference type="PDB" id="6PSX"/>
    </source>
</evidence>
<evidence type="ECO:0007829" key="61">
    <source>
        <dbReference type="PDB" id="6PSY"/>
    </source>
</evidence>
<evidence type="ECO:0007829" key="62">
    <source>
        <dbReference type="PDB" id="6ROH"/>
    </source>
</evidence>
<evidence type="ECO:0007829" key="63">
    <source>
        <dbReference type="PDB" id="6ROJ"/>
    </source>
</evidence>
<evidence type="ECO:0007829" key="64">
    <source>
        <dbReference type="PDB" id="7OH4"/>
    </source>
</evidence>
<evidence type="ECO:0007829" key="65">
    <source>
        <dbReference type="PDB" id="7OH5"/>
    </source>
</evidence>
<evidence type="ECO:0007829" key="66">
    <source>
        <dbReference type="PDB" id="7PEM"/>
    </source>
</evidence>
<feature type="chain" id="PRO_0000046233" description="Phospholipid-transporting ATPase DRS2">
    <location>
        <begin position="1"/>
        <end position="1355"/>
    </location>
</feature>
<feature type="topological domain" description="Cytoplasmic" evidence="6">
    <location>
        <begin position="1"/>
        <end position="221"/>
    </location>
</feature>
<feature type="transmembrane region" description="Helical" evidence="6">
    <location>
        <begin position="222"/>
        <end position="242"/>
    </location>
</feature>
<feature type="topological domain" description="Lumenal" evidence="6">
    <location>
        <begin position="243"/>
        <end position="246"/>
    </location>
</feature>
<feature type="transmembrane region" description="Helical" evidence="6">
    <location>
        <begin position="247"/>
        <end position="267"/>
    </location>
</feature>
<feature type="topological domain" description="Cytoplasmic" evidence="6">
    <location>
        <begin position="268"/>
        <end position="449"/>
    </location>
</feature>
<feature type="transmembrane region" description="Helical" evidence="6">
    <location>
        <begin position="450"/>
        <end position="470"/>
    </location>
</feature>
<feature type="topological domain" description="Lumenal" evidence="6">
    <location>
        <begin position="471"/>
        <end position="490"/>
    </location>
</feature>
<feature type="transmembrane region" description="Helical" evidence="6">
    <location>
        <begin position="491"/>
        <end position="511"/>
    </location>
</feature>
<feature type="topological domain" description="Cytoplasmic" evidence="6">
    <location>
        <begin position="512"/>
        <end position="1012"/>
    </location>
</feature>
<feature type="transmembrane region" description="Helical" evidence="6">
    <location>
        <begin position="1013"/>
        <end position="1033"/>
    </location>
</feature>
<feature type="topological domain" description="Lumenal" evidence="6">
    <location>
        <begin position="1034"/>
        <end position="1043"/>
    </location>
</feature>
<feature type="transmembrane region" description="Helical" evidence="6">
    <location>
        <begin position="1044"/>
        <end position="1064"/>
    </location>
</feature>
<feature type="topological domain" description="Cytoplasmic" evidence="6">
    <location>
        <begin position="1065"/>
        <end position="1094"/>
    </location>
</feature>
<feature type="transmembrane region" description="Helical" evidence="6">
    <location>
        <begin position="1095"/>
        <end position="1115"/>
    </location>
</feature>
<feature type="topological domain" description="Lumenal" evidence="6">
    <location>
        <begin position="1116"/>
        <end position="1131"/>
    </location>
</feature>
<feature type="transmembrane region" description="Helical" evidence="6">
    <location>
        <begin position="1132"/>
        <end position="1152"/>
    </location>
</feature>
<feature type="topological domain" description="Cytoplasmic" evidence="6">
    <location>
        <begin position="1153"/>
        <end position="1161"/>
    </location>
</feature>
<feature type="transmembrane region" description="Helical" evidence="6">
    <location>
        <begin position="1162"/>
        <end position="1182"/>
    </location>
</feature>
<feature type="topological domain" description="Lumenal" evidence="6">
    <location>
        <begin position="1183"/>
        <end position="1202"/>
    </location>
</feature>
<feature type="transmembrane region" description="Helical" evidence="6">
    <location>
        <begin position="1203"/>
        <end position="1223"/>
    </location>
</feature>
<feature type="topological domain" description="Cytoplasmic" evidence="6">
    <location>
        <begin position="1224"/>
        <end position="1355"/>
    </location>
</feature>
<feature type="region of interest" description="Involved in autoinhibition" evidence="25 28">
    <location>
        <begin position="1"/>
        <end position="104"/>
    </location>
</feature>
<feature type="region of interest" description="Disordered" evidence="7">
    <location>
        <begin position="1"/>
        <end position="50"/>
    </location>
</feature>
<feature type="region of interest" description="Involved in phosphatidylserine substrate recognition" evidence="24">
    <location>
        <begin position="237"/>
        <end position="238"/>
    </location>
</feature>
<feature type="region of interest" description="Interaction with GEA2" evidence="13">
    <location>
        <begin position="1230"/>
        <end position="1282"/>
    </location>
</feature>
<feature type="region of interest" description="Involved in autoinhibition" evidence="25 28 31">
    <location>
        <begin position="1231"/>
        <end position="1309"/>
    </location>
</feature>
<feature type="region of interest" description="Disordered" evidence="7">
    <location>
        <begin position="1305"/>
        <end position="1355"/>
    </location>
</feature>
<feature type="compositionally biased region" description="Basic and acidic residues" evidence="7">
    <location>
        <begin position="1"/>
        <end position="15"/>
    </location>
</feature>
<feature type="compositionally biased region" description="Acidic residues" evidence="7">
    <location>
        <begin position="16"/>
        <end position="26"/>
    </location>
</feature>
<feature type="compositionally biased region" description="Polar residues" evidence="7">
    <location>
        <begin position="30"/>
        <end position="44"/>
    </location>
</feature>
<feature type="compositionally biased region" description="Polar residues" evidence="7">
    <location>
        <begin position="1307"/>
        <end position="1323"/>
    </location>
</feature>
<feature type="compositionally biased region" description="Basic and acidic residues" evidence="7">
    <location>
        <begin position="1346"/>
        <end position="1355"/>
    </location>
</feature>
<feature type="active site" description="4-aspartylphosphate intermediate" evidence="40">
    <location>
        <position position="560"/>
    </location>
</feature>
<feature type="binding site" evidence="5">
    <location>
        <position position="560"/>
    </location>
    <ligand>
        <name>ATP</name>
        <dbReference type="ChEBI" id="CHEBI:30616"/>
    </ligand>
</feature>
<feature type="binding site" evidence="5">
    <location>
        <position position="560"/>
    </location>
    <ligand>
        <name>Mg(2+)</name>
        <dbReference type="ChEBI" id="CHEBI:18420"/>
    </ligand>
</feature>
<feature type="binding site" evidence="5">
    <location>
        <position position="561"/>
    </location>
    <ligand>
        <name>ATP</name>
        <dbReference type="ChEBI" id="CHEBI:30616"/>
    </ligand>
</feature>
<feature type="binding site" evidence="32 54 56">
    <location>
        <position position="562"/>
    </location>
    <ligand>
        <name>ATP</name>
        <dbReference type="ChEBI" id="CHEBI:30616"/>
    </ligand>
</feature>
<feature type="binding site" evidence="5">
    <location>
        <position position="562"/>
    </location>
    <ligand>
        <name>Mg(2+)</name>
        <dbReference type="ChEBI" id="CHEBI:18420"/>
    </ligand>
</feature>
<feature type="binding site" evidence="2">
    <location>
        <position position="655"/>
    </location>
    <ligand>
        <name>ATP</name>
        <dbReference type="ChEBI" id="CHEBI:30616"/>
    </ligand>
</feature>
<feature type="binding site" evidence="5">
    <location>
        <position position="698"/>
    </location>
    <ligand>
        <name>ATP</name>
        <dbReference type="ChEBI" id="CHEBI:30616"/>
    </ligand>
</feature>
<feature type="binding site" evidence="3">
    <location>
        <position position="700"/>
    </location>
    <ligand>
        <name>ATP</name>
        <dbReference type="ChEBI" id="CHEBI:30616"/>
    </ligand>
</feature>
<feature type="binding site" evidence="32 54 56">
    <location>
        <position position="703"/>
    </location>
    <ligand>
        <name>ATP</name>
        <dbReference type="ChEBI" id="CHEBI:30616"/>
    </ligand>
</feature>
<feature type="binding site" evidence="2">
    <location>
        <position position="721"/>
    </location>
    <ligand>
        <name>ATP</name>
        <dbReference type="ChEBI" id="CHEBI:30616"/>
    </ligand>
</feature>
<feature type="binding site" evidence="2">
    <location>
        <position position="755"/>
    </location>
    <ligand>
        <name>ATP</name>
        <dbReference type="ChEBI" id="CHEBI:30616"/>
    </ligand>
</feature>
<feature type="binding site" evidence="32 54">
    <location>
        <position position="756"/>
    </location>
    <ligand>
        <name>ATP</name>
        <dbReference type="ChEBI" id="CHEBI:30616"/>
    </ligand>
</feature>
<feature type="binding site" evidence="32 54">
    <location>
        <position position="835"/>
    </location>
    <ligand>
        <name>ATP</name>
        <dbReference type="ChEBI" id="CHEBI:30616"/>
    </ligand>
</feature>
<feature type="binding site" evidence="2">
    <location>
        <position position="836"/>
    </location>
    <ligand>
        <name>ATP</name>
        <dbReference type="ChEBI" id="CHEBI:30616"/>
    </ligand>
</feature>
<feature type="binding site" evidence="2">
    <location>
        <position position="837"/>
    </location>
    <ligand>
        <name>ATP</name>
        <dbReference type="ChEBI" id="CHEBI:30616"/>
    </ligand>
</feature>
<feature type="binding site" evidence="2">
    <location>
        <position position="928"/>
    </location>
    <ligand>
        <name>ATP</name>
        <dbReference type="ChEBI" id="CHEBI:30616"/>
    </ligand>
</feature>
<feature type="binding site" evidence="2">
    <location>
        <position position="934"/>
    </location>
    <ligand>
        <name>ATP</name>
        <dbReference type="ChEBI" id="CHEBI:30616"/>
    </ligand>
</feature>
<feature type="binding site" evidence="5">
    <location>
        <position position="954"/>
    </location>
    <ligand>
        <name>Mg(2+)</name>
        <dbReference type="ChEBI" id="CHEBI:18420"/>
    </ligand>
</feature>
<feature type="binding site" evidence="5">
    <location>
        <position position="957"/>
    </location>
    <ligand>
        <name>ATP</name>
        <dbReference type="ChEBI" id="CHEBI:30616"/>
    </ligand>
</feature>
<feature type="binding site" evidence="2">
    <location>
        <position position="958"/>
    </location>
    <ligand>
        <name>ATP</name>
        <dbReference type="ChEBI" id="CHEBI:30616"/>
    </ligand>
</feature>
<feature type="binding site" evidence="4">
    <location>
        <position position="958"/>
    </location>
    <ligand>
        <name>Mg(2+)</name>
        <dbReference type="ChEBI" id="CHEBI:18420"/>
    </ligand>
</feature>
<feature type="binding site" evidence="32 54">
    <location>
        <position position="1149"/>
    </location>
    <ligand>
        <name>a 1,2-diacyl-sn-glycero-3-phospho-(1D-myo-inositol 4-phosphate)</name>
        <dbReference type="ChEBI" id="CHEBI:58178"/>
    </ligand>
</feature>
<feature type="binding site" evidence="30 32 51 53 54 55">
    <location>
        <position position="1219"/>
    </location>
    <ligand>
        <name>a 1,2-diacyl-sn-glycero-3-phospho-(1D-myo-inositol 4-phosphate)</name>
        <dbReference type="ChEBI" id="CHEBI:58178"/>
    </ligand>
</feature>
<feature type="binding site" evidence="30 32 51 53 56">
    <location>
        <position position="1223"/>
    </location>
    <ligand>
        <name>a 1,2-diacyl-sn-glycero-3-phospho-(1D-myo-inositol 4-phosphate)</name>
        <dbReference type="ChEBI" id="CHEBI:58178"/>
    </ligand>
</feature>
<feature type="binding site" evidence="30 32 51 52 53 54 55">
    <location>
        <position position="1224"/>
    </location>
    <ligand>
        <name>a 1,2-diacyl-sn-glycero-3-phospho-(1D-myo-inositol 4-phosphate)</name>
        <dbReference type="ChEBI" id="CHEBI:58178"/>
    </ligand>
</feature>
<feature type="binding site" evidence="30 32 51 56">
    <location>
        <position position="1235"/>
    </location>
    <ligand>
        <name>a 1,2-diacyl-sn-glycero-3-phospho-(1D-myo-inositol 4-phosphate)</name>
        <dbReference type="ChEBI" id="CHEBI:58178"/>
    </ligand>
</feature>
<feature type="binding site" evidence="30 32 51 52 53 54 55 56">
    <location>
        <position position="1236"/>
    </location>
    <ligand>
        <name>a 1,2-diacyl-sn-glycero-3-phospho-(1D-myo-inositol 4-phosphate)</name>
        <dbReference type="ChEBI" id="CHEBI:58178"/>
    </ligand>
</feature>
<feature type="site" description="Involved in the release of the transported lipid into the cytosolic leaflet" evidence="1">
    <location>
        <position position="508"/>
    </location>
</feature>
<feature type="modified residue" description="Phosphoserine" evidence="58 59">
    <location>
        <position position="102"/>
    </location>
</feature>
<feature type="mutagenesis site" description="Loss of activity. Sensitive to papuamide B (phosphatidylserine-binding cytotoxin); the effect is suppressed when associated with S-445." evidence="24 29">
    <original>QQ</original>
    <variation>GA</variation>
    <location>
        <begin position="237"/>
        <end position="238"/>
    </location>
</feature>
<feature type="mutagenesis site" description="Reduces interaction with CDC50. Sensitive to cold." evidence="18 23">
    <original>G</original>
    <variation>L</variation>
    <location>
        <position position="341"/>
    </location>
</feature>
<feature type="mutagenesis site" description="Loss of activity. Does not appear to reduce interaction with CDC50. Sensitive to cold." evidence="18 23 26 28">
    <original>E</original>
    <variation>Q</variation>
    <location>
        <position position="342"/>
    </location>
</feature>
<feature type="mutagenesis site" description="Increases ATPase activity." evidence="32">
    <original>Y</original>
    <variation>F</variation>
    <location>
        <position position="380"/>
    </location>
</feature>
<feature type="mutagenesis site" description="No sensitivity to papuamide B (phosphatidylserine-binding cytotoxin) or cold. No sensitivity to papuamide B; when associated with 237-G--A-238 or K-473." evidence="24">
    <original>N</original>
    <variation>S</variation>
    <location>
        <position position="445"/>
    </location>
</feature>
<feature type="mutagenesis site" description="Sensitive to papuamide B (phosphatidylserine-binding cytotoxin); the effect is suppressed when associated with S-445." evidence="24">
    <original>D</original>
    <variation>K</variation>
    <location>
        <position position="473"/>
    </location>
</feature>
<feature type="mutagenesis site" description="Sensitive to duramycin (phosphatidylethanolamine-binding cytotoxin). Decreases ATPase activity." evidence="22">
    <original>F</original>
    <variation>L</variation>
    <location>
        <position position="511"/>
    </location>
</feature>
<feature type="mutagenesis site" description="Sensitive to papuamide B (phosphatidylserine-binding cytotoxin)." evidence="22 24">
    <original>F</original>
    <variation>Y</variation>
    <variation>L</variation>
    <location>
        <position position="511"/>
    </location>
</feature>
<feature type="mutagenesis site" description="Normal ATPase activity. No sensitivity to cold." evidence="22 24">
    <original>F</original>
    <variation>Y</variation>
    <location>
        <position position="511"/>
    </location>
</feature>
<feature type="mutagenesis site" description="Sensitive to cold. Reduces interaction with CDC50. Decreases protein level." evidence="8 18 26">
    <original>D</original>
    <variation>N</variation>
    <variation>E</variation>
    <location>
        <position position="560"/>
    </location>
</feature>
<feature type="mutagenesis site" description="Loss of activity. Sensitive to cinnamycin (phosphatidylethanolamine-binding cytotoxin)." evidence="18 23 26">
    <original>D</original>
    <variation>N</variation>
    <location>
        <position position="560"/>
    </location>
</feature>
<feature type="mutagenesis site" description="Abolishes ATPase activity and leads to cold sensitivity." evidence="31">
    <original>R</original>
    <variation>A</variation>
    <location>
        <position position="1228"/>
    </location>
</feature>
<feature type="mutagenesis site" description="Abolishes ATPase activity and leads to cold sensitivity." evidence="31">
    <original>Y</original>
    <variation>A</variation>
    <location>
        <position position="1235"/>
    </location>
</feature>
<feature type="mutagenesis site" description="Abolishes ATPase activity and leads to cold sensitivity." evidence="31">
    <original>H</original>
    <variation>A</variation>
    <location>
        <position position="1236"/>
    </location>
</feature>
<feature type="mutagenesis site" description="Sensitive to cold." evidence="20">
    <location>
        <begin position="1250"/>
        <end position="1263"/>
    </location>
</feature>
<feature type="mutagenesis site" description="Sensitive to cold." evidence="13">
    <location>
        <begin position="1259"/>
        <end position="1282"/>
    </location>
</feature>
<feature type="mutagenesis site" description="Decreases phosphatidylserine flippase activity. No effect on interaction with GEA2. Sensitive to cold." evidence="20">
    <original>RMKKQR</original>
    <variation>AMAAQA</variation>
    <location>
        <begin position="1268"/>
        <end position="1273"/>
    </location>
</feature>
<feature type="mutagenesis site" description="Decreases phosphatidylserine flippase activity and decreases interaction with GEA2. Sensitive to cold." evidence="20">
    <location>
        <begin position="1268"/>
        <end position="1273"/>
    </location>
</feature>
<feature type="mutagenesis site" description="Sensitive to cold." evidence="20">
    <location>
        <begin position="1274"/>
        <end position="1282"/>
    </location>
</feature>
<feature type="sequence conflict" description="In Ref. 1; AAA16891 and 2; AAC05006." evidence="37" ref="1 2">
    <original>AN</original>
    <variation>GY</variation>
    <location>
        <begin position="45"/>
        <end position="46"/>
    </location>
</feature>
<feature type="sequence conflict" description="In Ref. 1; AAA16891 and 2; AAC05006." evidence="37" ref="1 2">
    <original>A</original>
    <variation>R</variation>
    <location>
        <position position="450"/>
    </location>
</feature>
<feature type="sequence conflict" description="In Ref. 1; AAA16891 and 2; AAC05006." evidence="37" ref="1 2">
    <original>P</original>
    <variation>G</variation>
    <location>
        <position position="674"/>
    </location>
</feature>
<feature type="sequence conflict" description="In Ref. 1; AAA16891 and 2; AAC05006." evidence="37" ref="1 2">
    <original>NT</original>
    <variation>KS</variation>
    <location>
        <begin position="891"/>
        <end position="892"/>
    </location>
</feature>
<feature type="sequence conflict" description="In Ref. 1; AAA16891 and 2; AAC05006." evidence="37" ref="1 2">
    <original>GD</original>
    <variation>AS</variation>
    <location>
        <begin position="953"/>
        <end position="954"/>
    </location>
</feature>
<feature type="sequence conflict" description="In Ref. 1; AAA16891 and 2; AAC05006." evidence="37" ref="1 2">
    <original>V</original>
    <variation>L</variation>
    <location>
        <position position="987"/>
    </location>
</feature>
<feature type="strand" evidence="62">
    <location>
        <begin position="183"/>
        <end position="188"/>
    </location>
</feature>
<feature type="turn" evidence="62">
    <location>
        <begin position="190"/>
        <end position="193"/>
    </location>
</feature>
<feature type="turn" evidence="65">
    <location>
        <begin position="194"/>
        <end position="196"/>
    </location>
</feature>
<feature type="strand" evidence="61">
    <location>
        <begin position="210"/>
        <end position="212"/>
    </location>
</feature>
<feature type="helix" evidence="61">
    <location>
        <begin position="213"/>
        <end position="222"/>
    </location>
</feature>
<feature type="helix" evidence="61">
    <location>
        <begin position="225"/>
        <end position="235"/>
    </location>
</feature>
<feature type="helix" evidence="61">
    <location>
        <begin position="236"/>
        <end position="238"/>
    </location>
</feature>
<feature type="turn" evidence="61">
    <location>
        <begin position="240"/>
        <end position="242"/>
    </location>
</feature>
<feature type="helix" evidence="61">
    <location>
        <begin position="249"/>
        <end position="280"/>
    </location>
</feature>
<feature type="strand" evidence="61">
    <location>
        <begin position="283"/>
        <end position="287"/>
    </location>
</feature>
<feature type="strand" evidence="61">
    <location>
        <begin position="289"/>
        <end position="291"/>
    </location>
</feature>
<feature type="strand" evidence="61">
    <location>
        <begin position="293"/>
        <end position="299"/>
    </location>
</feature>
<feature type="strand" evidence="61">
    <location>
        <begin position="307"/>
        <end position="310"/>
    </location>
</feature>
<feature type="strand" evidence="64">
    <location>
        <begin position="312"/>
        <end position="315"/>
    </location>
</feature>
<feature type="strand" evidence="61">
    <location>
        <begin position="318"/>
        <end position="327"/>
    </location>
</feature>
<feature type="helix" evidence="61">
    <location>
        <begin position="328"/>
        <end position="330"/>
    </location>
</feature>
<feature type="strand" evidence="61">
    <location>
        <begin position="333"/>
        <end position="335"/>
    </location>
</feature>
<feature type="turn" evidence="61">
    <location>
        <begin position="337"/>
        <end position="340"/>
    </location>
</feature>
<feature type="strand" evidence="61">
    <location>
        <begin position="344"/>
        <end position="347"/>
    </location>
</feature>
<feature type="turn" evidence="61">
    <location>
        <begin position="352"/>
        <end position="356"/>
    </location>
</feature>
<feature type="turn" evidence="61">
    <location>
        <begin position="361"/>
        <end position="364"/>
    </location>
</feature>
<feature type="strand" evidence="61">
    <location>
        <begin position="369"/>
        <end position="371"/>
    </location>
</feature>
<feature type="strand" evidence="61">
    <location>
        <begin position="384"/>
        <end position="387"/>
    </location>
</feature>
<feature type="strand" evidence="61">
    <location>
        <begin position="392"/>
        <end position="395"/>
    </location>
</feature>
<feature type="helix" evidence="61">
    <location>
        <begin position="397"/>
        <end position="399"/>
    </location>
</feature>
<feature type="strand" evidence="61">
    <location>
        <begin position="403"/>
        <end position="411"/>
    </location>
</feature>
<feature type="strand" evidence="61">
    <location>
        <begin position="413"/>
        <end position="419"/>
    </location>
</feature>
<feature type="strand" evidence="61">
    <location>
        <begin position="423"/>
        <end position="427"/>
    </location>
</feature>
<feature type="helix" evidence="61">
    <location>
        <begin position="439"/>
        <end position="472"/>
    </location>
</feature>
<feature type="turn" evidence="62">
    <location>
        <begin position="474"/>
        <end position="476"/>
    </location>
</feature>
<feature type="turn" evidence="62">
    <location>
        <begin position="478"/>
        <end position="481"/>
    </location>
</feature>
<feature type="helix" evidence="61">
    <location>
        <begin position="487"/>
        <end position="501"/>
    </location>
</feature>
<feature type="helix" evidence="61">
    <location>
        <begin position="503"/>
        <end position="505"/>
    </location>
</feature>
<feature type="strand" evidence="61">
    <location>
        <begin position="508"/>
        <end position="510"/>
    </location>
</feature>
<feature type="helix" evidence="61">
    <location>
        <begin position="511"/>
        <end position="525"/>
    </location>
</feature>
<feature type="helix" evidence="63">
    <location>
        <begin position="529"/>
        <end position="531"/>
    </location>
</feature>
<feature type="turn" evidence="61">
    <location>
        <begin position="534"/>
        <end position="537"/>
    </location>
</feature>
<feature type="strand" evidence="61">
    <location>
        <begin position="542"/>
        <end position="544"/>
    </location>
</feature>
<feature type="strand" evidence="61">
    <location>
        <begin position="546"/>
        <end position="548"/>
    </location>
</feature>
<feature type="helix" evidence="61">
    <location>
        <begin position="549"/>
        <end position="552"/>
    </location>
</feature>
<feature type="strand" evidence="61">
    <location>
        <begin position="556"/>
        <end position="559"/>
    </location>
</feature>
<feature type="turn" evidence="61">
    <location>
        <begin position="562"/>
        <end position="565"/>
    </location>
</feature>
<feature type="strand" evidence="61">
    <location>
        <begin position="571"/>
        <end position="579"/>
    </location>
</feature>
<feature type="strand" evidence="62">
    <location>
        <begin position="580"/>
        <end position="585"/>
    </location>
</feature>
<feature type="strand" evidence="66">
    <location>
        <begin position="588"/>
        <end position="590"/>
    </location>
</feature>
<feature type="strand" evidence="62">
    <location>
        <begin position="596"/>
        <end position="598"/>
    </location>
</feature>
<feature type="helix" evidence="61">
    <location>
        <begin position="601"/>
        <end position="611"/>
    </location>
</feature>
<feature type="turn" evidence="61">
    <location>
        <begin position="612"/>
        <end position="615"/>
    </location>
</feature>
<feature type="strand" evidence="63">
    <location>
        <begin position="617"/>
        <end position="619"/>
    </location>
</feature>
<feature type="helix" evidence="61">
    <location>
        <begin position="620"/>
        <end position="632"/>
    </location>
</feature>
<feature type="strand" evidence="61">
    <location>
        <begin position="637"/>
        <end position="640"/>
    </location>
</feature>
<feature type="strand" evidence="61">
    <location>
        <begin position="642"/>
        <end position="644"/>
    </location>
</feature>
<feature type="strand" evidence="61">
    <location>
        <begin position="646"/>
        <end position="649"/>
    </location>
</feature>
<feature type="helix" evidence="61">
    <location>
        <begin position="653"/>
        <end position="663"/>
    </location>
</feature>
<feature type="turn" evidence="65">
    <location>
        <begin position="664"/>
        <end position="666"/>
    </location>
</feature>
<feature type="strand" evidence="61">
    <location>
        <begin position="668"/>
        <end position="672"/>
    </location>
</feature>
<feature type="strand" evidence="61">
    <location>
        <begin position="676"/>
        <end position="681"/>
    </location>
</feature>
<feature type="strand" evidence="61">
    <location>
        <begin position="683"/>
        <end position="685"/>
    </location>
</feature>
<feature type="strand" evidence="61">
    <location>
        <begin position="689"/>
        <end position="692"/>
    </location>
</feature>
<feature type="turn" evidence="61">
    <location>
        <begin position="700"/>
        <end position="702"/>
    </location>
</feature>
<feature type="strand" evidence="61">
    <location>
        <begin position="704"/>
        <end position="710"/>
    </location>
</feature>
<feature type="strand" evidence="61">
    <location>
        <begin position="716"/>
        <end position="722"/>
    </location>
</feature>
<feature type="helix" evidence="61">
    <location>
        <begin position="724"/>
        <end position="727"/>
    </location>
</feature>
<feature type="helix" evidence="61">
    <location>
        <begin position="728"/>
        <end position="730"/>
    </location>
</feature>
<feature type="helix" evidence="61">
    <location>
        <begin position="733"/>
        <end position="736"/>
    </location>
</feature>
<feature type="helix" evidence="61">
    <location>
        <begin position="739"/>
        <end position="750"/>
    </location>
</feature>
<feature type="turn" evidence="61">
    <location>
        <begin position="751"/>
        <end position="753"/>
    </location>
</feature>
<feature type="strand" evidence="61">
    <location>
        <begin position="755"/>
        <end position="763"/>
    </location>
</feature>
<feature type="helix" evidence="61">
    <location>
        <begin position="766"/>
        <end position="780"/>
    </location>
</feature>
<feature type="strand" evidence="62">
    <location>
        <begin position="783"/>
        <end position="785"/>
    </location>
</feature>
<feature type="helix" evidence="61">
    <location>
        <begin position="786"/>
        <end position="796"/>
    </location>
</feature>
<feature type="strand" evidence="61">
    <location>
        <begin position="800"/>
        <end position="810"/>
    </location>
</feature>
<feature type="helix" evidence="61">
    <location>
        <begin position="817"/>
        <end position="825"/>
    </location>
</feature>
<feature type="turn" evidence="61">
    <location>
        <begin position="826"/>
        <end position="828"/>
    </location>
</feature>
<feature type="strand" evidence="61">
    <location>
        <begin position="830"/>
        <end position="834"/>
    </location>
</feature>
<feature type="helix" evidence="61">
    <location>
        <begin position="839"/>
        <end position="848"/>
    </location>
</feature>
<feature type="strand" evidence="66">
    <location>
        <begin position="854"/>
        <end position="858"/>
    </location>
</feature>
<feature type="strand" evidence="61">
    <location>
        <begin position="859"/>
        <end position="861"/>
    </location>
</feature>
<feature type="helix" evidence="61">
    <location>
        <begin position="868"/>
        <end position="880"/>
    </location>
</feature>
<feature type="strand" evidence="62">
    <location>
        <begin position="881"/>
        <end position="883"/>
    </location>
</feature>
<feature type="turn" evidence="62">
    <location>
        <begin position="887"/>
        <end position="889"/>
    </location>
</feature>
<feature type="helix" evidence="61">
    <location>
        <begin position="890"/>
        <end position="892"/>
    </location>
</feature>
<feature type="strand" evidence="61">
    <location>
        <begin position="894"/>
        <end position="897"/>
    </location>
</feature>
<feature type="helix" evidence="61">
    <location>
        <begin position="900"/>
        <end position="903"/>
    </location>
</feature>
<feature type="turn" evidence="61">
    <location>
        <begin position="908"/>
        <end position="910"/>
    </location>
</feature>
<feature type="helix" evidence="61">
    <location>
        <begin position="911"/>
        <end position="918"/>
    </location>
</feature>
<feature type="strand" evidence="61">
    <location>
        <begin position="921"/>
        <end position="926"/>
    </location>
</feature>
<feature type="helix" evidence="61">
    <location>
        <begin position="931"/>
        <end position="943"/>
    </location>
</feature>
<feature type="strand" evidence="61">
    <location>
        <begin position="949"/>
        <end position="955"/>
    </location>
</feature>
<feature type="helix" evidence="62">
    <location>
        <begin position="956"/>
        <end position="958"/>
    </location>
</feature>
<feature type="helix" evidence="61">
    <location>
        <begin position="959"/>
        <end position="963"/>
    </location>
</feature>
<feature type="strand" evidence="61">
    <location>
        <begin position="965"/>
        <end position="971"/>
    </location>
</feature>
<feature type="strand" evidence="61">
    <location>
        <begin position="973"/>
        <end position="975"/>
    </location>
</feature>
<feature type="helix" evidence="61">
    <location>
        <begin position="978"/>
        <end position="981"/>
    </location>
</feature>
<feature type="strand" evidence="61">
    <location>
        <begin position="983"/>
        <end position="988"/>
    </location>
</feature>
<feature type="helix" evidence="61">
    <location>
        <begin position="992"/>
        <end position="998"/>
    </location>
</feature>
<feature type="turn" evidence="61">
    <location>
        <begin position="999"/>
        <end position="1001"/>
    </location>
</feature>
<feature type="helix" evidence="61">
    <location>
        <begin position="1002"/>
        <end position="1022"/>
    </location>
</feature>
<feature type="helix" evidence="61">
    <location>
        <begin position="1025"/>
        <end position="1028"/>
    </location>
</feature>
<feature type="helix" evidence="61">
    <location>
        <begin position="1030"/>
        <end position="1033"/>
    </location>
</feature>
<feature type="helix" evidence="61">
    <location>
        <begin position="1043"/>
        <end position="1049"/>
    </location>
</feature>
<feature type="turn" evidence="61">
    <location>
        <begin position="1050"/>
        <end position="1053"/>
    </location>
</feature>
<feature type="helix" evidence="61">
    <location>
        <begin position="1056"/>
        <end position="1062"/>
    </location>
</feature>
<feature type="helix" evidence="61">
    <location>
        <begin position="1072"/>
        <end position="1075"/>
    </location>
</feature>
<feature type="helix" evidence="61">
    <location>
        <begin position="1077"/>
        <end position="1080"/>
    </location>
</feature>
<feature type="helix" evidence="61">
    <location>
        <begin position="1081"/>
        <end position="1084"/>
    </location>
</feature>
<feature type="strand" evidence="65">
    <location>
        <begin position="1087"/>
        <end position="1089"/>
    </location>
</feature>
<feature type="helix" evidence="61">
    <location>
        <begin position="1091"/>
        <end position="1115"/>
    </location>
</feature>
<feature type="strand" evidence="63">
    <location>
        <begin position="1116"/>
        <end position="1119"/>
    </location>
</feature>
<feature type="strand" evidence="60">
    <location>
        <begin position="1124"/>
        <end position="1126"/>
    </location>
</feature>
<feature type="helix" evidence="61">
    <location>
        <begin position="1131"/>
        <end position="1152"/>
    </location>
</feature>
<feature type="strand" evidence="61">
    <location>
        <begin position="1155"/>
        <end position="1157"/>
    </location>
</feature>
<feature type="helix" evidence="61">
    <location>
        <begin position="1161"/>
        <end position="1164"/>
    </location>
</feature>
<feature type="helix" evidence="61">
    <location>
        <begin position="1166"/>
        <end position="1182"/>
    </location>
</feature>
<feature type="turn" evidence="61">
    <location>
        <begin position="1183"/>
        <end position="1187"/>
    </location>
</feature>
<feature type="helix" evidence="61">
    <location>
        <begin position="1190"/>
        <end position="1192"/>
    </location>
</feature>
<feature type="helix" evidence="61">
    <location>
        <begin position="1195"/>
        <end position="1199"/>
    </location>
</feature>
<feature type="helix" evidence="61">
    <location>
        <begin position="1203"/>
        <end position="1229"/>
    </location>
</feature>
<feature type="turn" evidence="61">
    <location>
        <begin position="1233"/>
        <end position="1235"/>
    </location>
</feature>
<feature type="helix" evidence="61">
    <location>
        <begin position="1236"/>
        <end position="1239"/>
    </location>
</feature>
<feature type="helix" evidence="61">
    <location>
        <begin position="1255"/>
        <end position="1261"/>
    </location>
</feature>
<feature type="strand" evidence="61">
    <location>
        <begin position="1263"/>
        <end position="1266"/>
    </location>
</feature>
<feature type="helix" evidence="61">
    <location>
        <begin position="1281"/>
        <end position="1283"/>
    </location>
</feature>
<feature type="turn" evidence="61">
    <location>
        <begin position="1286"/>
        <end position="1291"/>
    </location>
</feature>
<feature type="strand" evidence="61">
    <location>
        <begin position="1294"/>
        <end position="1296"/>
    </location>
</feature>
<feature type="strand" evidence="61">
    <location>
        <begin position="1300"/>
        <end position="1303"/>
    </location>
</feature>
<reference key="1">
    <citation type="journal article" date="1993" name="Mol. Cell. Biol.">
        <title>DRS1 to DRS7, novel genes required for ribosome assembly and function in Saccharomyces cerevisiae.</title>
        <authorList>
            <person name="Ripmaster T.L."/>
            <person name="Vaughn G.P."/>
            <person name="Woolford J.L. Jr."/>
        </authorList>
    </citation>
    <scope>NUCLEOTIDE SEQUENCE [GENOMIC DNA]</scope>
</reference>
<reference key="2">
    <citation type="journal article" date="1995" name="Proc. Natl. Acad. Sci. U.S.A.">
        <title>The nucleotide sequence of chromosome I from Saccharomyces cerevisiae.</title>
        <authorList>
            <person name="Bussey H."/>
            <person name="Kaback D.B."/>
            <person name="Zhong W.-W."/>
            <person name="Vo D.H."/>
            <person name="Clark M.W."/>
            <person name="Fortin N."/>
            <person name="Hall J."/>
            <person name="Ouellette B.F.F."/>
            <person name="Keng T."/>
            <person name="Barton A.B."/>
            <person name="Su Y."/>
            <person name="Davies C.J."/>
            <person name="Storms R.K."/>
        </authorList>
    </citation>
    <scope>NUCLEOTIDE SEQUENCE [LARGE SCALE GENOMIC DNA]</scope>
    <source>
        <strain>ATCC 204508 / S288c</strain>
    </source>
</reference>
<reference key="3">
    <citation type="journal article" date="2014" name="G3 (Bethesda)">
        <title>The reference genome sequence of Saccharomyces cerevisiae: Then and now.</title>
        <authorList>
            <person name="Engel S.R."/>
            <person name="Dietrich F.S."/>
            <person name="Fisk D.G."/>
            <person name="Binkley G."/>
            <person name="Balakrishnan R."/>
            <person name="Costanzo M.C."/>
            <person name="Dwight S.S."/>
            <person name="Hitz B.C."/>
            <person name="Karra K."/>
            <person name="Nash R.S."/>
            <person name="Weng S."/>
            <person name="Wong E.D."/>
            <person name="Lloyd P."/>
            <person name="Skrzypek M.S."/>
            <person name="Miyasato S.R."/>
            <person name="Simison M."/>
            <person name="Cherry J.M."/>
        </authorList>
    </citation>
    <scope>GENOME REANNOTATION</scope>
    <scope>SEQUENCE REVISION TO 45-46; 450; 674; 891-892; 953-954 AND 987</scope>
    <source>
        <strain>ATCC 204508 / S288c</strain>
    </source>
</reference>
<reference key="4">
    <citation type="journal article" date="1999" name="J. Cell Biol.">
        <title>Role for Drs2p, a P-type ATPase and potential aminophospholipid translocase, in yeast late Golgi function.</title>
        <authorList>
            <person name="Chen C.Y."/>
            <person name="Ingram M.F."/>
            <person name="Rosal P.H."/>
            <person name="Graham T.R."/>
        </authorList>
    </citation>
    <scope>FUNCTION</scope>
    <scope>SUBCELLULAR LOCATION</scope>
    <scope>DISRUPTION PHENOTYPE</scope>
    <scope>MUTAGENESIS OF ASP-560</scope>
</reference>
<reference key="5">
    <citation type="journal article" date="2002" name="Curr. Biol.">
        <title>Drs2p-dependent formation of exocytic clathrin-coated vesicles in vivo.</title>
        <authorList>
            <person name="Gall W.E."/>
            <person name="Geething N.C."/>
            <person name="Hua Z."/>
            <person name="Ingram M.F."/>
            <person name="Liu K."/>
            <person name="Chen S.I."/>
            <person name="Graham T.R."/>
        </authorList>
    </citation>
    <scope>FUNCTION</scope>
    <scope>SUBCELLULAR LOCATION</scope>
</reference>
<reference key="6">
    <citation type="journal article" date="2003" name="Mol. Biol. Cell">
        <title>Drs2p-related P-type ATPases Dnf1p and Dnf2p are required for phospholipid translocation across the yeast plasma membrane and serve a role in endocytosis.</title>
        <authorList>
            <person name="Pomorski T."/>
            <person name="Lombardi R."/>
            <person name="Riezman H."/>
            <person name="Devaux P.F."/>
            <person name="van Meer G."/>
            <person name="Holthuis J.C."/>
        </authorList>
    </citation>
    <scope>SUBCELLULAR LOCATION</scope>
    <scope>DISRUPTION PHENOTYPE</scope>
</reference>
<reference key="7">
    <citation type="journal article" date="2003" name="Nature">
        <title>Global analysis of protein localization in budding yeast.</title>
        <authorList>
            <person name="Huh W.-K."/>
            <person name="Falvo J.V."/>
            <person name="Gerke L.C."/>
            <person name="Carroll A.S."/>
            <person name="Howson R.W."/>
            <person name="Weissman J.S."/>
            <person name="O'Shea E.K."/>
        </authorList>
    </citation>
    <scope>SUBCELLULAR LOCATION [LARGE SCALE ANALYSIS]</scope>
</reference>
<reference key="8">
    <citation type="journal article" date="2003" name="Nature">
        <title>Global analysis of protein expression in yeast.</title>
        <authorList>
            <person name="Ghaemmaghami S."/>
            <person name="Huh W.-K."/>
            <person name="Bower K."/>
            <person name="Howson R.W."/>
            <person name="Belle A."/>
            <person name="Dephoure N."/>
            <person name="O'Shea E.K."/>
            <person name="Weissman J.S."/>
        </authorList>
    </citation>
    <scope>LEVEL OF PROTEIN EXPRESSION [LARGE SCALE ANALYSIS]</scope>
</reference>
<reference key="9">
    <citation type="journal article" date="2004" name="J. Cell Sci.">
        <title>The Arf activator Gea2p and the P-type ATPase Drs2p interact at the Golgi in Saccharomyces cerevisiae.</title>
        <authorList>
            <person name="Chantalat S."/>
            <person name="Park S.K."/>
            <person name="Hua Z."/>
            <person name="Liu K."/>
            <person name="Gobin R."/>
            <person name="Peyroche A."/>
            <person name="Rambourg A."/>
            <person name="Graham T.R."/>
            <person name="Jackson C.L."/>
        </authorList>
    </citation>
    <scope>INTERACTION WITH GEA2 AND GEA1</scope>
    <scope>DISRUPTION PHENOTYPE</scope>
    <scope>MUTAGENESIS OF 1259-ALA--GLU-1282</scope>
</reference>
<reference key="10">
    <citation type="journal article" date="2004" name="Mol. Biol. Cell">
        <title>Cdc50p, a protein required for polarized growth, associates with the Drs2p P-type ATPase implicated in phospholipid translocation in Saccharomyces cerevisiae.</title>
        <authorList>
            <person name="Saito K."/>
            <person name="Fujimura-Kamada K."/>
            <person name="Furuta N."/>
            <person name="Kato U."/>
            <person name="Umeda M."/>
            <person name="Tanaka K."/>
        </authorList>
    </citation>
    <scope>INTERACTION WITH CDC50</scope>
</reference>
<reference key="11">
    <citation type="journal article" date="2004" name="Proc. Natl. Acad. Sci. U.S.A.">
        <title>Drs2p-coupled aminophospholipid translocase activity in yeast Golgi membranes and relationship to in vivo function.</title>
        <authorList>
            <person name="Natarajan P."/>
            <person name="Wang J."/>
            <person name="Hua Z."/>
            <person name="Graham T.R."/>
        </authorList>
    </citation>
    <scope>FUNCTION</scope>
    <scope>CATALYTIC ACTIVITY</scope>
    <scope>COFACTOR</scope>
    <scope>SUBCELLULAR LOCATION</scope>
</reference>
<reference key="12">
    <citation type="journal article" date="2006" name="Mol. Biol. Cell">
        <title>Loss of P4 ATPases Drs2p and Dnf3p disrupts aminophospholipid transport and asymmetry in yeast post-Golgi secretory vesicles.</title>
        <authorList>
            <person name="Alder-Baerens N."/>
            <person name="Lisman Q."/>
            <person name="Luong L."/>
            <person name="Pomorski T."/>
            <person name="Holthuis J.C."/>
        </authorList>
    </citation>
    <scope>FUNCTION</scope>
    <scope>CATALYTIC ACTIVITY</scope>
    <scope>SUBCELLULAR LOCATION</scope>
    <scope>DISRUPTION PHENOTYPE</scope>
</reference>
<reference key="13">
    <citation type="journal article" date="2006" name="Proc. Natl. Acad. Sci. U.S.A.">
        <title>A global topology map of the Saccharomyces cerevisiae membrane proteome.</title>
        <authorList>
            <person name="Kim H."/>
            <person name="Melen K."/>
            <person name="Oesterberg M."/>
            <person name="von Heijne G."/>
        </authorList>
    </citation>
    <scope>TOPOLOGY [LARGE SCALE ANALYSIS]</scope>
    <source>
        <strain>ATCC 208353 / W303-1A</strain>
    </source>
</reference>
<reference key="14">
    <citation type="journal article" date="2006" name="Traffic">
        <title>Roles for the Drs2p-Cdc50p complex in protein transport and phosphatidylserine asymmetry of the yeast plasma membrane.</title>
        <authorList>
            <person name="Chen S."/>
            <person name="Wang J."/>
            <person name="Muthusamy B.P."/>
            <person name="Liu K."/>
            <person name="Zare S."/>
            <person name="Andersen R.J."/>
            <person name="Graham T.R."/>
        </authorList>
    </citation>
    <scope>FUNCTION</scope>
    <scope>INTERACTION WITH CDC50</scope>
    <scope>SUBCELLULAR LOCATION</scope>
    <scope>DISRUPTION PHENOTYPE</scope>
</reference>
<reference key="15">
    <citation type="journal article" date="2007" name="J. Proteome Res.">
        <title>Large-scale phosphorylation analysis of alpha-factor-arrested Saccharomyces cerevisiae.</title>
        <authorList>
            <person name="Li X."/>
            <person name="Gerber S.A."/>
            <person name="Rudner A.D."/>
            <person name="Beausoleil S.A."/>
            <person name="Haas W."/>
            <person name="Villen J."/>
            <person name="Elias J.E."/>
            <person name="Gygi S.P."/>
        </authorList>
    </citation>
    <scope>IDENTIFICATION BY MASS SPECTROMETRY [LARGE SCALE ANALYSIS]</scope>
    <source>
        <strain>ADR376</strain>
    </source>
</reference>
<reference key="16">
    <citation type="journal article" date="2008" name="Mol. Cell. Proteomics">
        <title>A multidimensional chromatography technology for in-depth phosphoproteome analysis.</title>
        <authorList>
            <person name="Albuquerque C.P."/>
            <person name="Smolka M.B."/>
            <person name="Payne S.H."/>
            <person name="Bafna V."/>
            <person name="Eng J."/>
            <person name="Zhou H."/>
        </authorList>
    </citation>
    <scope>PHOSPHORYLATION [LARGE SCALE ANALYSIS] AT SER-102</scope>
    <scope>IDENTIFICATION BY MASS SPECTROMETRY [LARGE SCALE ANALYSIS]</scope>
</reference>
<reference key="17">
    <citation type="journal article" date="2009" name="J. Biol. Chem.">
        <title>Cdc50p plays a vital role in the ATPase reaction cycle of the putative aminophospholipid transporter Drs2p.</title>
        <authorList>
            <person name="Lenoir G."/>
            <person name="Williamson P."/>
            <person name="Puts C.F."/>
            <person name="Holthuis J.C."/>
        </authorList>
    </citation>
    <scope>FUNCTION</scope>
    <scope>ACTIVITY REGULATION</scope>
    <scope>IDENTIFICATION IN A COMPLEX WITH CDC50</scope>
    <scope>INTERACTION WITH CDC50</scope>
    <scope>SUBCELLULAR LOCATION</scope>
    <scope>DISRUPTION PHENOTYPE</scope>
    <scope>ACTIVE SITE</scope>
    <scope>MUTAGENESIS OF GLY-341; GLU-342 AND ASP-560</scope>
</reference>
<reference key="18">
    <citation type="journal article" date="2009" name="Nat. Cell Biol.">
        <title>Regulation of a Golgi flippase by phosphoinositides and an ArfGEF.</title>
        <authorList>
            <person name="Natarajan P."/>
            <person name="Liu K."/>
            <person name="Patil D.V."/>
            <person name="Sciorra V.A."/>
            <person name="Jackson C.L."/>
            <person name="Graham T.R."/>
        </authorList>
    </citation>
    <scope>FUNCTION</scope>
    <scope>CATALYTIC ACTIVITY</scope>
    <scope>ACTIVITY REGULATION</scope>
    <scope>SUBCELLULAR LOCATION</scope>
    <scope>DISRUPTION PHENOTYPE</scope>
    <scope>MUTAGENESIS OF 1250-ARG--VAL-1263; 1268-ARG--ARG-1273 AND 1274-GLY--GLU-1282</scope>
</reference>
<reference key="19">
    <citation type="journal article" date="2009" name="Proc. Natl. Acad. Sci. U.S.A.">
        <title>Reconstitution of phospholipid translocase activity with purified Drs2p, a type-IV P-type ATPase from budding yeast.</title>
        <authorList>
            <person name="Zhou X."/>
            <person name="Graham T.R."/>
        </authorList>
    </citation>
    <scope>FUNCTION</scope>
    <scope>CATALYTIC ACTIVITY</scope>
    <scope>COFACTOR</scope>
    <scope>ACTIVITY REGULATION</scope>
    <scope>DISRUPTION PHENOTYPE</scope>
</reference>
<reference key="20">
    <citation type="journal article" date="2009" name="Science">
        <title>Global analysis of Cdk1 substrate phosphorylation sites provides insights into evolution.</title>
        <authorList>
            <person name="Holt L.J."/>
            <person name="Tuch B.B."/>
            <person name="Villen J."/>
            <person name="Johnson A.D."/>
            <person name="Gygi S.P."/>
            <person name="Morgan D.O."/>
        </authorList>
    </citation>
    <scope>PHOSPHORYLATION [LARGE SCALE ANALYSIS] AT SER-102</scope>
    <scope>IDENTIFICATION BY MASS SPECTROMETRY [LARGE SCALE ANALYSIS]</scope>
</reference>
<reference key="21">
    <citation type="journal article" date="2011" name="J. Biochem.">
        <title>Isolation and characterization of novel mutations in CDC50, the non-catalytic subunit of the Drs2p phospholipid flippase.</title>
        <authorList>
            <person name="Takahashi Y."/>
            <person name="Fujimura-Kamada K."/>
            <person name="Kondo S."/>
            <person name="Tanaka K."/>
        </authorList>
    </citation>
    <scope>FUNCTION</scope>
    <scope>INTERACTION WITH CDC50</scope>
</reference>
<reference key="22">
    <citation type="journal article" date="2012" name="J. Biol. Chem.">
        <title>Mapping functional interactions in a heterodimeric phospholipid pump.</title>
        <authorList>
            <person name="Puts C.F."/>
            <person name="Panatala R."/>
            <person name="Hennrich H."/>
            <person name="Tsareva A."/>
            <person name="Williamson P."/>
            <person name="Holthuis J.C."/>
        </authorList>
    </citation>
    <scope>IDENTIFICATION IN A COMPLEX WITH CDC50</scope>
    <scope>INTERACTION WITH CDC50</scope>
    <scope>MUTAGENESIS OF GLY-341; GLU-342 AND ASP-560</scope>
</reference>
<reference key="23">
    <citation type="journal article" date="2012" name="Proc. Natl. Acad. Sci. U.S.A.">
        <title>Identification of residues defining phospholipid flippase substrate specificity of type IV P-type ATPases.</title>
        <authorList>
            <person name="Baldridge R.D."/>
            <person name="Graham T.R."/>
        </authorList>
    </citation>
    <scope>FUNCTION</scope>
    <scope>CATALYTIC ACTIVITY</scope>
    <scope>DISRUPTION PHENOTYPE</scope>
    <scope>MUTAGENESIS OF PHE-511</scope>
</reference>
<reference key="24">
    <citation type="journal article" date="2013" name="J. Biol. Chem.">
        <title>Auto-inhibition of Drs2p, a yeast phospholipid flippase, by its carboxyl-terminal tail.</title>
        <authorList>
            <person name="Zhou X."/>
            <person name="Sebastian T.T."/>
            <person name="Graham T.R."/>
        </authorList>
    </citation>
    <scope>FUNCTION</scope>
    <scope>CATALYTIC ACTIVITY</scope>
    <scope>COFACTOR</scope>
    <scope>ACTIVITY REGULATION</scope>
    <scope>DOMAIN C-TERMINAL PART</scope>
</reference>
<reference key="25">
    <citation type="journal article" date="2013" name="Proc. Natl. Acad. Sci. U.S.A.">
        <title>Two-gate mechanism for phospholipid selection and transport by type IV P-type ATPases.</title>
        <authorList>
            <person name="Baldridge R.D."/>
            <person name="Graham T.R."/>
        </authorList>
    </citation>
    <scope>DISRUPTION PHENOTYPE</scope>
    <scope>MUTAGENESIS OF 237-GLN-GLN-238; ASN-445; ASP-473 AND PHE-511</scope>
</reference>
<reference key="26">
    <citation type="journal article" date="2014" name="PLoS ONE">
        <title>A high-yield co-expression system for the purification of an intact Drs2p-Cdc50p lipid flippase complex, critically dependent on and stabilized by phosphatidylinositol-4-phosphate.</title>
        <authorList>
            <person name="Azouaoui H."/>
            <person name="Montigny C."/>
            <person name="Ash M.R."/>
            <person name="Fijalkowski F."/>
            <person name="Jacquot A."/>
            <person name="Groenberg C."/>
            <person name="Lopez-Marques R.L."/>
            <person name="Palmgren M.G."/>
            <person name="Garrigos M."/>
            <person name="le Maire M."/>
            <person name="Decottignies P."/>
            <person name="Gourdon P."/>
            <person name="Nissen P."/>
            <person name="Champeil P."/>
            <person name="Lenoir G."/>
        </authorList>
    </citation>
    <scope>FUNCTION</scope>
    <scope>CATALYTIC ACTIVITY</scope>
    <scope>ACTIVITY REGULATION</scope>
    <scope>IDENTIFICATION IN A COMPLEX WITH CDC50</scope>
    <scope>INTERACTION WITH CDC50</scope>
    <scope>IDENTIFICATION BY MASS SPECTROMETRY</scope>
    <scope>DISRUPTION PHENOTYPE</scope>
    <scope>MUTAGENESIS OF GLU-342 AND ASP-560</scope>
</reference>
<reference key="27">
    <citation type="journal article" date="2016" name="J. Biol. Chem.">
        <title>The Essential Neo1 Protein from Budding Yeast Plays a Role in Establishing Aminophospholipid Asymmetry of the Plasma Membrane.</title>
        <authorList>
            <person name="Takar M."/>
            <person name="Wu Y."/>
            <person name="Graham T.R."/>
        </authorList>
    </citation>
    <scope>DISRUPTION PHENOTYPE</scope>
</reference>
<reference key="28">
    <citation type="journal article" date="2017" name="J. Biol. Chem.">
        <title>High phosphatidylinositol 4-phosphate (PI4P)-dependent ATPase activity for the Drs2p-Cdc50p flippase after removal of its N- and C-terminal extensions.</title>
        <authorList>
            <person name="Azouaoui H."/>
            <person name="Montigny C."/>
            <person name="Dieudonne T."/>
            <person name="Champeil P."/>
            <person name="Jacquot A."/>
            <person name="Vazquez-Ibar J.L."/>
            <person name="Le Marechal P."/>
            <person name="Ulstrup J."/>
            <person name="Ash M.R."/>
            <person name="Lyons J.A."/>
            <person name="Nissen P."/>
            <person name="Lenoir G."/>
        </authorList>
    </citation>
    <scope>FUNCTION</scope>
    <scope>CATALYTIC ACTIVITY</scope>
    <scope>ACTIVITY REGULATION</scope>
    <scope>IDENTIFICATION IN A COMPLEX WITH CDC50</scope>
    <scope>INTERACTION WITH CDC50</scope>
    <scope>DOMAIN C-TERMINAL PART</scope>
    <scope>MASS SPECTROMETRY</scope>
    <scope>MUTAGENESIS OF GLU-342</scope>
</reference>
<reference key="29">
    <citation type="journal article" date="2019" name="J. Lipid Res.">
        <title>The PQ-loop protein Any1 segregates Drs2 and Neo1 functions required for viability and plasma membrane phospholipid asymmetry.</title>
        <authorList>
            <person name="Takar M."/>
            <person name="Huang Y."/>
            <person name="Graham T.R."/>
        </authorList>
    </citation>
    <scope>FUNCTION</scope>
    <scope>DISRUPTION PHENOTYPE</scope>
    <scope>MUTAGENESIS OF 237-GLN-GLN-238</scope>
</reference>
<reference evidence="50 51 52" key="30">
    <citation type="journal article" date="2019" name="Nature">
        <title>Structure and autoregulation of a P4-ATPase lipid flippase.</title>
        <authorList>
            <person name="Timcenko M."/>
            <person name="Lyons J.A."/>
            <person name="Januliene D."/>
            <person name="Ulstrup J.J."/>
            <person name="Dieudonne T."/>
            <person name="Montigny C."/>
            <person name="Ash M.R."/>
            <person name="Karlsen J.L."/>
            <person name="Boesen T."/>
            <person name="Kuhlbrandt W."/>
            <person name="Lenoir G."/>
            <person name="Moeller A."/>
            <person name="Nissen P."/>
        </authorList>
    </citation>
    <scope>STRUCTURE BY ELECTRON MICROSCOPY (2.80 ANGSTROMS) IN COMPLEX WITH CDC50 AND MAGNESIUM</scope>
    <scope>FUNCTION</scope>
    <scope>ACTIVITY REGULATION</scope>
    <scope>IDENTIFICATION IN A COMPLEX WITH CDC50</scope>
    <scope>INTERACTION WITH CDC50</scope>
    <scope>DOMAIN C-TERMINAL PART</scope>
    <scope>1,2-DIACYL-SN-GLYCERO-3-PHOSPHO-(1D-MYO-INOSITOL 4-PHOSPHATE) BINDING</scope>
</reference>
<reference evidence="48 49" key="31">
    <citation type="journal article" date="2019" name="Nat. Commun.">
        <title>Autoinhibition and activation mechanisms of the eukaryotic lipid flippase Drs2p-Cdc50p.</title>
        <authorList>
            <person name="Bai L."/>
            <person name="Kovach A."/>
            <person name="You Q."/>
            <person name="Hsu H.C."/>
            <person name="Zhao G."/>
            <person name="Li H."/>
        </authorList>
    </citation>
    <scope>STRUCTURE BY ELECTRON MICROSCOPY (2.80 ANGSTROMS) IN COMPLEX WITH CDC50</scope>
    <scope>FUNCTION</scope>
    <scope>CATALYTIC ACTIVITY</scope>
    <scope>ACTIVITY REGULATION</scope>
    <scope>IDENTIFICATION IN A COMPLEX WITH CDC50</scope>
    <scope>INTERACTION WITH CDC50</scope>
    <scope>DOMAIN C-TERMINAL PART</scope>
    <scope>MUTAGENESIS OF ARG-1228; TYR-1235 AND HIS-1236</scope>
</reference>
<reference evidence="53 54 55 56" key="32">
    <citation type="journal article" date="2021" name="J. Mol. Biol.">
        <title>Structural Basis of Substrate-Independent Phosphorylation in a P4-ATPase Lipid Flippase.</title>
        <authorList>
            <person name="Timcenko M."/>
            <person name="Dieudonne T."/>
            <person name="Montigny C."/>
            <person name="Boesen T."/>
            <person name="Lyons J.A."/>
            <person name="Lenoir G."/>
            <person name="Nissen P."/>
        </authorList>
    </citation>
    <scope>STRUCTURE BY ELECTRON MICROSCOPY (2.90 ANGSTROMS) IN COMPLEX WITH CDC50; 1,2-DIACYL-SN-GLYCERO-3-PHOSPHO-(1D-MYO-INOSITOL 4-PHOSPHATE); MAGNESIUM AND ADP</scope>
    <scope>FUNCTION</scope>
    <scope>CATALYTIC ACTIVITY</scope>
    <scope>ACTIVITY REGULATION</scope>
    <scope>COFACTOR</scope>
    <scope>IDENTIFICATION IN A COMPLEX WITH CDC50</scope>
    <scope>INTERACTION WITH CDC50</scope>
    <scope>1,2-DIACYL-SN-GLYCERO-3-PHOSPHO-(1D-MYO-INOSITOL 4-PHOSPHATE) BINDING</scope>
    <scope>MUTAGENESIS OF TYR-380</scope>
</reference>
<reference evidence="57" key="33">
    <citation type="submission" date="2021-08" db="PDB data bank">
        <title>Substrate Transport and Specificity in a Phospholipid Flippase.</title>
        <authorList>
            <person name="Wang Y."/>
            <person name="Lyons J.A."/>
            <person name="Timcenko M."/>
            <person name="Kummerer F."/>
            <person name="de Groot B.L."/>
            <person name="Nissen P."/>
            <person name="Gapsys V."/>
            <person name="Lindorff-Larsen K."/>
        </authorList>
    </citation>
    <scope>STRUCTURE BY ELECTRON MICROSCOPY (3.10 ANGSTROMS) IN COMPLEX WITH CDC50</scope>
    <scope>IDENTIFICATION IN A COMPLEX WITH CDC50</scope>
    <scope>INTERACTION WITH CDC50</scope>
</reference>